<sequence>MKRPDYRTLQALDAVIRERGFERAAQKLCITQSAVSQRIKQLENMFGQPLLVRTVPPRPTEQGQKLLALLRQVELLEEEWLGDEQTGSTPLLLSLAVNADSLATWLLPALAPVLADSPIRLNLQVEDETRTQERLRRGEVVGAVSIQHQALPSCLVDKLGALDYLFVSSKPFAEKYFPNGVTRSALLKAPVVAFDHLDDMHQAFLQQNFDLPPGSVPCHIVNSSEAFVQLARQGTTCCMIPHLQIEKELASGELIDLTPGLFQRRMLYWHRFAPESRMMRKVTDALLDYGHKVLRQD</sequence>
<organism>
    <name type="scientific">Shigella boydii serotype 4 (strain Sb227)</name>
    <dbReference type="NCBI Taxonomy" id="300268"/>
    <lineage>
        <taxon>Bacteria</taxon>
        <taxon>Pseudomonadati</taxon>
        <taxon>Pseudomonadota</taxon>
        <taxon>Gammaproteobacteria</taxon>
        <taxon>Enterobacterales</taxon>
        <taxon>Enterobacteriaceae</taxon>
        <taxon>Shigella</taxon>
    </lineage>
</organism>
<evidence type="ECO:0000255" key="1">
    <source>
        <dbReference type="HAMAP-Rule" id="MF_00513"/>
    </source>
</evidence>
<evidence type="ECO:0000305" key="2"/>
<proteinExistence type="inferred from homology"/>
<reference key="1">
    <citation type="journal article" date="2005" name="Nucleic Acids Res.">
        <title>Genome dynamics and diversity of Shigella species, the etiologic agents of bacillary dysentery.</title>
        <authorList>
            <person name="Yang F."/>
            <person name="Yang J."/>
            <person name="Zhang X."/>
            <person name="Chen L."/>
            <person name="Jiang Y."/>
            <person name="Yan Y."/>
            <person name="Tang X."/>
            <person name="Wang J."/>
            <person name="Xiong Z."/>
            <person name="Dong J."/>
            <person name="Xue Y."/>
            <person name="Zhu Y."/>
            <person name="Xu X."/>
            <person name="Sun L."/>
            <person name="Chen S."/>
            <person name="Nie H."/>
            <person name="Peng J."/>
            <person name="Xu J."/>
            <person name="Wang Y."/>
            <person name="Yuan Z."/>
            <person name="Wen Y."/>
            <person name="Yao Z."/>
            <person name="Shen Y."/>
            <person name="Qiang B."/>
            <person name="Hou Y."/>
            <person name="Yu J."/>
            <person name="Jin Q."/>
        </authorList>
    </citation>
    <scope>NUCLEOTIDE SEQUENCE [LARGE SCALE GENOMIC DNA]</scope>
    <source>
        <strain>Sb227</strain>
    </source>
</reference>
<comment type="function">
    <text evidence="1">Controls the transcription of genes involved in arginine and lysine metabolism.</text>
</comment>
<comment type="subunit">
    <text evidence="1">Homodimer.</text>
</comment>
<comment type="similarity">
    <text evidence="2">Belongs to the LysR transcriptional regulatory family.</text>
</comment>
<name>ARGP_SHIBS</name>
<protein>
    <recommendedName>
        <fullName evidence="1">HTH-type transcriptional regulator ArgP</fullName>
    </recommendedName>
</protein>
<feature type="chain" id="PRO_0000258614" description="HTH-type transcriptional regulator ArgP">
    <location>
        <begin position="1"/>
        <end position="297"/>
    </location>
</feature>
<feature type="domain" description="HTH lysR-type" evidence="1">
    <location>
        <begin position="4"/>
        <end position="60"/>
    </location>
</feature>
<feature type="DNA-binding region" description="H-T-H motif" evidence="1">
    <location>
        <begin position="21"/>
        <end position="40"/>
    </location>
</feature>
<accession>Q31WH5</accession>
<dbReference type="EMBL" id="CP000036">
    <property type="protein sequence ID" value="ABB67583.1"/>
    <property type="molecule type" value="Genomic_DNA"/>
</dbReference>
<dbReference type="RefSeq" id="WP_000828351.1">
    <property type="nucleotide sequence ID" value="NC_007613.1"/>
</dbReference>
<dbReference type="SMR" id="Q31WH5"/>
<dbReference type="GeneID" id="93779084"/>
<dbReference type="KEGG" id="sbo:SBO_3078"/>
<dbReference type="HOGENOM" id="CLU_063829_0_0_6"/>
<dbReference type="Proteomes" id="UP000007067">
    <property type="component" value="Chromosome"/>
</dbReference>
<dbReference type="GO" id="GO:0003677">
    <property type="term" value="F:DNA binding"/>
    <property type="evidence" value="ECO:0007669"/>
    <property type="project" value="UniProtKB-UniRule"/>
</dbReference>
<dbReference type="GO" id="GO:0003700">
    <property type="term" value="F:DNA-binding transcription factor activity"/>
    <property type="evidence" value="ECO:0007669"/>
    <property type="project" value="UniProtKB-UniRule"/>
</dbReference>
<dbReference type="CDD" id="cd08428">
    <property type="entry name" value="PBP2_IciA_ArgP"/>
    <property type="match status" value="1"/>
</dbReference>
<dbReference type="FunFam" id="1.10.10.10:FF:000061">
    <property type="entry name" value="HTH-type transcriptional regulator ArgP"/>
    <property type="match status" value="1"/>
</dbReference>
<dbReference type="FunFam" id="3.40.190.290:FF:000002">
    <property type="entry name" value="HTH-type transcriptional regulator ArgP"/>
    <property type="match status" value="1"/>
</dbReference>
<dbReference type="Gene3D" id="3.40.190.290">
    <property type="match status" value="1"/>
</dbReference>
<dbReference type="Gene3D" id="1.10.10.10">
    <property type="entry name" value="Winged helix-like DNA-binding domain superfamily/Winged helix DNA-binding domain"/>
    <property type="match status" value="1"/>
</dbReference>
<dbReference type="HAMAP" id="MF_00513">
    <property type="entry name" value="HTH_type_ArgP"/>
    <property type="match status" value="1"/>
</dbReference>
<dbReference type="InterPro" id="IPR017685">
    <property type="entry name" value="ArgP"/>
</dbReference>
<dbReference type="InterPro" id="IPR023490">
    <property type="entry name" value="ArgP_gammaproteobact"/>
</dbReference>
<dbReference type="InterPro" id="IPR050176">
    <property type="entry name" value="LTTR"/>
</dbReference>
<dbReference type="InterPro" id="IPR005119">
    <property type="entry name" value="LysR_subst-bd"/>
</dbReference>
<dbReference type="InterPro" id="IPR000847">
    <property type="entry name" value="Tscrpt_reg_HTH_LysR"/>
</dbReference>
<dbReference type="InterPro" id="IPR036388">
    <property type="entry name" value="WH-like_DNA-bd_sf"/>
</dbReference>
<dbReference type="InterPro" id="IPR036390">
    <property type="entry name" value="WH_DNA-bd_sf"/>
</dbReference>
<dbReference type="NCBIfam" id="TIGR03298">
    <property type="entry name" value="argP"/>
    <property type="match status" value="1"/>
</dbReference>
<dbReference type="NCBIfam" id="NF002964">
    <property type="entry name" value="PRK03635.1"/>
    <property type="match status" value="1"/>
</dbReference>
<dbReference type="NCBIfam" id="NF009888">
    <property type="entry name" value="PRK13348.1"/>
    <property type="match status" value="1"/>
</dbReference>
<dbReference type="PANTHER" id="PTHR30579:SF2">
    <property type="entry name" value="HTH-TYPE TRANSCRIPTIONAL REGULATOR ARGP"/>
    <property type="match status" value="1"/>
</dbReference>
<dbReference type="PANTHER" id="PTHR30579">
    <property type="entry name" value="TRANSCRIPTIONAL REGULATOR"/>
    <property type="match status" value="1"/>
</dbReference>
<dbReference type="Pfam" id="PF00126">
    <property type="entry name" value="HTH_1"/>
    <property type="match status" value="1"/>
</dbReference>
<dbReference type="Pfam" id="PF03466">
    <property type="entry name" value="LysR_substrate"/>
    <property type="match status" value="1"/>
</dbReference>
<dbReference type="PRINTS" id="PR00039">
    <property type="entry name" value="HTHLYSR"/>
</dbReference>
<dbReference type="SUPFAM" id="SSF53850">
    <property type="entry name" value="Periplasmic binding protein-like II"/>
    <property type="match status" value="1"/>
</dbReference>
<dbReference type="SUPFAM" id="SSF46785">
    <property type="entry name" value="Winged helix' DNA-binding domain"/>
    <property type="match status" value="1"/>
</dbReference>
<dbReference type="PROSITE" id="PS50931">
    <property type="entry name" value="HTH_LYSR"/>
    <property type="match status" value="1"/>
</dbReference>
<gene>
    <name evidence="1" type="primary">argP</name>
    <name type="synonym">iciA</name>
    <name type="ordered locus">SBO_3078</name>
</gene>
<keyword id="KW-0238">DNA-binding</keyword>
<keyword id="KW-0804">Transcription</keyword>
<keyword id="KW-0805">Transcription regulation</keyword>